<sequence>MKIGIIGAMEEEVTLLRDKIENRQTISLGGCEIYTGQLNGTEVALLKSGIGKVAAALGATLLLEHCKPDVIINTGSAGGLAPTLKVGDIVVSDEARYHDADVTAFGYEYGQLPGCPAGFKADDKLIAAAEACIAELNLNAVRGLIVSGDAFINGSVGLAKIRHNFPQAIAVEMEATAIAHVCHNFNVPFVVVRAISDVADQQSHLSFDEFLAVAAKQSSLMVESLVQKLAHG</sequence>
<proteinExistence type="inferred from homology"/>
<protein>
    <recommendedName>
        <fullName evidence="1">5'-methylthioadenosine/S-adenosylhomocysteine nucleosidase</fullName>
        <shortName evidence="1">MTA/SAH nucleosidase</shortName>
        <shortName evidence="1">MTAN</shortName>
        <ecNumber evidence="1">3.2.2.9</ecNumber>
    </recommendedName>
    <alternativeName>
        <fullName evidence="1">5'-deoxyadenosine nucleosidase</fullName>
        <shortName evidence="1">DOA nucleosidase</shortName>
        <shortName evidence="1">dAdo nucleosidase</shortName>
    </alternativeName>
    <alternativeName>
        <fullName evidence="1">5'-methylthioadenosine nucleosidase</fullName>
        <shortName evidence="1">MTA nucleosidase</shortName>
    </alternativeName>
    <alternativeName>
        <fullName evidence="1">S-adenosylhomocysteine nucleosidase</fullName>
        <shortName evidence="1">AdoHcy nucleosidase</shortName>
        <shortName evidence="1">SAH nucleosidase</shortName>
        <shortName evidence="1">SRH nucleosidase</shortName>
    </alternativeName>
</protein>
<reference key="1">
    <citation type="journal article" date="2009" name="PLoS Genet.">
        <title>Organised genome dynamics in the Escherichia coli species results in highly diverse adaptive paths.</title>
        <authorList>
            <person name="Touchon M."/>
            <person name="Hoede C."/>
            <person name="Tenaillon O."/>
            <person name="Barbe V."/>
            <person name="Baeriswyl S."/>
            <person name="Bidet P."/>
            <person name="Bingen E."/>
            <person name="Bonacorsi S."/>
            <person name="Bouchier C."/>
            <person name="Bouvet O."/>
            <person name="Calteau A."/>
            <person name="Chiapello H."/>
            <person name="Clermont O."/>
            <person name="Cruveiller S."/>
            <person name="Danchin A."/>
            <person name="Diard M."/>
            <person name="Dossat C."/>
            <person name="Karoui M.E."/>
            <person name="Frapy E."/>
            <person name="Garry L."/>
            <person name="Ghigo J.M."/>
            <person name="Gilles A.M."/>
            <person name="Johnson J."/>
            <person name="Le Bouguenec C."/>
            <person name="Lescat M."/>
            <person name="Mangenot S."/>
            <person name="Martinez-Jehanne V."/>
            <person name="Matic I."/>
            <person name="Nassif X."/>
            <person name="Oztas S."/>
            <person name="Petit M.A."/>
            <person name="Pichon C."/>
            <person name="Rouy Z."/>
            <person name="Ruf C.S."/>
            <person name="Schneider D."/>
            <person name="Tourret J."/>
            <person name="Vacherie B."/>
            <person name="Vallenet D."/>
            <person name="Medigue C."/>
            <person name="Rocha E.P.C."/>
            <person name="Denamur E."/>
        </authorList>
    </citation>
    <scope>NUCLEOTIDE SEQUENCE [LARGE SCALE GENOMIC DNA]</scope>
    <source>
        <strain>IAI1</strain>
    </source>
</reference>
<keyword id="KW-0028">Amino-acid biosynthesis</keyword>
<keyword id="KW-0378">Hydrolase</keyword>
<keyword id="KW-0486">Methionine biosynthesis</keyword>
<name>MTNN_ECO8A</name>
<comment type="function">
    <text evidence="1">Catalyzes the irreversible cleavage of the glycosidic bond in both 5'-methylthioadenosine (MTA) and S-adenosylhomocysteine (SAH/AdoHcy) to adenine and the corresponding thioribose, 5'-methylthioribose and S-ribosylhomocysteine, respectively. Also cleaves 5'-deoxyadenosine, a toxic by-product of radical S-adenosylmethionine (SAM) enzymes, into 5-deoxyribose and adenine. Thus, is required for in vivo function of the radical SAM enzymes biotin synthase and lipoic acid synthase, that are inhibited by 5'-deoxyadenosine accumulation.</text>
</comment>
<comment type="catalytic activity">
    <reaction evidence="1">
        <text>S-adenosyl-L-homocysteine + H2O = S-(5-deoxy-D-ribos-5-yl)-L-homocysteine + adenine</text>
        <dbReference type="Rhea" id="RHEA:17805"/>
        <dbReference type="ChEBI" id="CHEBI:15377"/>
        <dbReference type="ChEBI" id="CHEBI:16708"/>
        <dbReference type="ChEBI" id="CHEBI:57856"/>
        <dbReference type="ChEBI" id="CHEBI:58195"/>
        <dbReference type="EC" id="3.2.2.9"/>
    </reaction>
</comment>
<comment type="catalytic activity">
    <reaction evidence="1">
        <text>S-methyl-5'-thioadenosine + H2O = 5-(methylsulfanyl)-D-ribose + adenine</text>
        <dbReference type="Rhea" id="RHEA:13617"/>
        <dbReference type="ChEBI" id="CHEBI:15377"/>
        <dbReference type="ChEBI" id="CHEBI:16708"/>
        <dbReference type="ChEBI" id="CHEBI:17509"/>
        <dbReference type="ChEBI" id="CHEBI:78440"/>
        <dbReference type="EC" id="3.2.2.9"/>
    </reaction>
</comment>
<comment type="catalytic activity">
    <reaction evidence="1">
        <text>5'-deoxyadenosine + H2O = 5-deoxy-D-ribose + adenine</text>
        <dbReference type="Rhea" id="RHEA:29859"/>
        <dbReference type="ChEBI" id="CHEBI:15377"/>
        <dbReference type="ChEBI" id="CHEBI:16708"/>
        <dbReference type="ChEBI" id="CHEBI:17319"/>
        <dbReference type="ChEBI" id="CHEBI:149540"/>
        <dbReference type="EC" id="3.2.2.9"/>
    </reaction>
    <physiologicalReaction direction="left-to-right" evidence="1">
        <dbReference type="Rhea" id="RHEA:29860"/>
    </physiologicalReaction>
</comment>
<comment type="pathway">
    <text evidence="1">Amino-acid biosynthesis; L-methionine biosynthesis via salvage pathway; S-methyl-5-thio-alpha-D-ribose 1-phosphate from S-methyl-5'-thioadenosine (hydrolase route): step 1/2.</text>
</comment>
<comment type="subunit">
    <text evidence="1">Homodimer.</text>
</comment>
<comment type="similarity">
    <text evidence="1">Belongs to the PNP/UDP phosphorylase family. MtnN subfamily.</text>
</comment>
<accession>B7M1A0</accession>
<evidence type="ECO:0000255" key="1">
    <source>
        <dbReference type="HAMAP-Rule" id="MF_01684"/>
    </source>
</evidence>
<organism>
    <name type="scientific">Escherichia coli O8 (strain IAI1)</name>
    <dbReference type="NCBI Taxonomy" id="585034"/>
    <lineage>
        <taxon>Bacteria</taxon>
        <taxon>Pseudomonadati</taxon>
        <taxon>Pseudomonadota</taxon>
        <taxon>Gammaproteobacteria</taxon>
        <taxon>Enterobacterales</taxon>
        <taxon>Enterobacteriaceae</taxon>
        <taxon>Escherichia</taxon>
    </lineage>
</organism>
<dbReference type="EC" id="3.2.2.9" evidence="1"/>
<dbReference type="EMBL" id="CU928160">
    <property type="protein sequence ID" value="CAQ97046.1"/>
    <property type="molecule type" value="Genomic_DNA"/>
</dbReference>
<dbReference type="RefSeq" id="WP_000689844.1">
    <property type="nucleotide sequence ID" value="NC_011741.1"/>
</dbReference>
<dbReference type="SMR" id="B7M1A0"/>
<dbReference type="GeneID" id="93777267"/>
<dbReference type="KEGG" id="ecr:ECIAI1_0158"/>
<dbReference type="HOGENOM" id="CLU_031248_2_2_6"/>
<dbReference type="UniPathway" id="UPA00904">
    <property type="reaction ID" value="UER00871"/>
</dbReference>
<dbReference type="GO" id="GO:0005829">
    <property type="term" value="C:cytosol"/>
    <property type="evidence" value="ECO:0007669"/>
    <property type="project" value="TreeGrafter"/>
</dbReference>
<dbReference type="GO" id="GO:0008782">
    <property type="term" value="F:adenosylhomocysteine nucleosidase activity"/>
    <property type="evidence" value="ECO:0007669"/>
    <property type="project" value="UniProtKB-UniRule"/>
</dbReference>
<dbReference type="GO" id="GO:0008930">
    <property type="term" value="F:methylthioadenosine nucleosidase activity"/>
    <property type="evidence" value="ECO:0007669"/>
    <property type="project" value="UniProtKB-UniRule"/>
</dbReference>
<dbReference type="GO" id="GO:0019509">
    <property type="term" value="P:L-methionine salvage from methylthioadenosine"/>
    <property type="evidence" value="ECO:0007669"/>
    <property type="project" value="UniProtKB-UniRule"/>
</dbReference>
<dbReference type="GO" id="GO:0019284">
    <property type="term" value="P:L-methionine salvage from S-adenosylmethionine"/>
    <property type="evidence" value="ECO:0007669"/>
    <property type="project" value="TreeGrafter"/>
</dbReference>
<dbReference type="GO" id="GO:0046124">
    <property type="term" value="P:purine deoxyribonucleoside catabolic process"/>
    <property type="evidence" value="ECO:0007669"/>
    <property type="project" value="UniProtKB-UniRule"/>
</dbReference>
<dbReference type="CDD" id="cd09008">
    <property type="entry name" value="MTAN"/>
    <property type="match status" value="1"/>
</dbReference>
<dbReference type="FunFam" id="3.40.50.1580:FF:000001">
    <property type="entry name" value="MTA/SAH nucleosidase family protein"/>
    <property type="match status" value="1"/>
</dbReference>
<dbReference type="Gene3D" id="3.40.50.1580">
    <property type="entry name" value="Nucleoside phosphorylase domain"/>
    <property type="match status" value="1"/>
</dbReference>
<dbReference type="HAMAP" id="MF_01684">
    <property type="entry name" value="Salvage_MtnN"/>
    <property type="match status" value="1"/>
</dbReference>
<dbReference type="InterPro" id="IPR010049">
    <property type="entry name" value="MTA_SAH_Nsdase"/>
</dbReference>
<dbReference type="InterPro" id="IPR000845">
    <property type="entry name" value="Nucleoside_phosphorylase_d"/>
</dbReference>
<dbReference type="InterPro" id="IPR035994">
    <property type="entry name" value="Nucleoside_phosphorylase_sf"/>
</dbReference>
<dbReference type="NCBIfam" id="TIGR01704">
    <property type="entry name" value="MTA_SAH-Nsdase"/>
    <property type="match status" value="1"/>
</dbReference>
<dbReference type="NCBIfam" id="NF004079">
    <property type="entry name" value="PRK05584.1"/>
    <property type="match status" value="1"/>
</dbReference>
<dbReference type="PANTHER" id="PTHR46832">
    <property type="entry name" value="5'-METHYLTHIOADENOSINE/S-ADENOSYLHOMOCYSTEINE NUCLEOSIDASE"/>
    <property type="match status" value="1"/>
</dbReference>
<dbReference type="PANTHER" id="PTHR46832:SF1">
    <property type="entry name" value="5'-METHYLTHIOADENOSINE_S-ADENOSYLHOMOCYSTEINE NUCLEOSIDASE"/>
    <property type="match status" value="1"/>
</dbReference>
<dbReference type="Pfam" id="PF01048">
    <property type="entry name" value="PNP_UDP_1"/>
    <property type="match status" value="1"/>
</dbReference>
<dbReference type="SUPFAM" id="SSF53167">
    <property type="entry name" value="Purine and uridine phosphorylases"/>
    <property type="match status" value="1"/>
</dbReference>
<feature type="chain" id="PRO_1000187422" description="5'-methylthioadenosine/S-adenosylhomocysteine nucleosidase">
    <location>
        <begin position="1"/>
        <end position="232"/>
    </location>
</feature>
<feature type="active site" description="Proton acceptor" evidence="1">
    <location>
        <position position="12"/>
    </location>
</feature>
<feature type="active site" description="Proton donor" evidence="1">
    <location>
        <position position="197"/>
    </location>
</feature>
<feature type="binding site" evidence="1">
    <location>
        <position position="78"/>
    </location>
    <ligand>
        <name>substrate</name>
    </ligand>
</feature>
<feature type="binding site" evidence="1">
    <location>
        <position position="152"/>
    </location>
    <ligand>
        <name>substrate</name>
    </ligand>
</feature>
<feature type="binding site" evidence="1">
    <location>
        <begin position="173"/>
        <end position="174"/>
    </location>
    <ligand>
        <name>substrate</name>
    </ligand>
</feature>
<gene>
    <name evidence="1" type="primary">mtnN</name>
    <name type="ordered locus">ECIAI1_0158</name>
</gene>